<gene>
    <name evidence="1" type="primary">gcvT</name>
    <name type="ordered locus">CLM_0815</name>
</gene>
<protein>
    <recommendedName>
        <fullName evidence="1">Aminomethyltransferase</fullName>
        <ecNumber evidence="1">2.1.2.10</ecNumber>
    </recommendedName>
    <alternativeName>
        <fullName evidence="1">Glycine cleavage system T protein</fullName>
    </alternativeName>
</protein>
<comment type="function">
    <text evidence="1">The glycine cleavage system catalyzes the degradation of glycine.</text>
</comment>
<comment type="catalytic activity">
    <reaction evidence="1">
        <text>N(6)-[(R)-S(8)-aminomethyldihydrolipoyl]-L-lysyl-[protein] + (6S)-5,6,7,8-tetrahydrofolate = N(6)-[(R)-dihydrolipoyl]-L-lysyl-[protein] + (6R)-5,10-methylene-5,6,7,8-tetrahydrofolate + NH4(+)</text>
        <dbReference type="Rhea" id="RHEA:16945"/>
        <dbReference type="Rhea" id="RHEA-COMP:10475"/>
        <dbReference type="Rhea" id="RHEA-COMP:10492"/>
        <dbReference type="ChEBI" id="CHEBI:15636"/>
        <dbReference type="ChEBI" id="CHEBI:28938"/>
        <dbReference type="ChEBI" id="CHEBI:57453"/>
        <dbReference type="ChEBI" id="CHEBI:83100"/>
        <dbReference type="ChEBI" id="CHEBI:83143"/>
        <dbReference type="EC" id="2.1.2.10"/>
    </reaction>
</comment>
<comment type="subunit">
    <text evidence="1">The glycine cleavage system is composed of four proteins: P, T, L and H.</text>
</comment>
<comment type="similarity">
    <text evidence="1">Belongs to the GcvT family.</text>
</comment>
<proteinExistence type="inferred from homology"/>
<evidence type="ECO:0000255" key="1">
    <source>
        <dbReference type="HAMAP-Rule" id="MF_00259"/>
    </source>
</evidence>
<accession>C1FTW3</accession>
<reference key="1">
    <citation type="submission" date="2008-10" db="EMBL/GenBank/DDBJ databases">
        <title>Genome sequence of Clostridium botulinum A2 Kyoto.</title>
        <authorList>
            <person name="Shrivastava S."/>
            <person name="Brinkac L.M."/>
            <person name="Brown J.L."/>
            <person name="Bruce D."/>
            <person name="Detter C.C."/>
            <person name="Johnson E.A."/>
            <person name="Munk C.A."/>
            <person name="Smith L.A."/>
            <person name="Smith T.J."/>
            <person name="Sutton G."/>
            <person name="Brettin T.S."/>
        </authorList>
    </citation>
    <scope>NUCLEOTIDE SEQUENCE [LARGE SCALE GENOMIC DNA]</scope>
    <source>
        <strain>Kyoto / Type A2</strain>
    </source>
</reference>
<feature type="chain" id="PRO_1000125633" description="Aminomethyltransferase">
    <location>
        <begin position="1"/>
        <end position="370"/>
    </location>
</feature>
<name>GCST_CLOBJ</name>
<dbReference type="EC" id="2.1.2.10" evidence="1"/>
<dbReference type="EMBL" id="CP001581">
    <property type="protein sequence ID" value="ACO85842.1"/>
    <property type="molecule type" value="Genomic_DNA"/>
</dbReference>
<dbReference type="RefSeq" id="WP_012704980.1">
    <property type="nucleotide sequence ID" value="NC_012563.1"/>
</dbReference>
<dbReference type="SMR" id="C1FTW3"/>
<dbReference type="KEGG" id="cby:CLM_0815"/>
<dbReference type="eggNOG" id="COG0404">
    <property type="taxonomic scope" value="Bacteria"/>
</dbReference>
<dbReference type="HOGENOM" id="CLU_007884_10_2_9"/>
<dbReference type="Proteomes" id="UP000001374">
    <property type="component" value="Chromosome"/>
</dbReference>
<dbReference type="GO" id="GO:0005829">
    <property type="term" value="C:cytosol"/>
    <property type="evidence" value="ECO:0007669"/>
    <property type="project" value="TreeGrafter"/>
</dbReference>
<dbReference type="GO" id="GO:0005960">
    <property type="term" value="C:glycine cleavage complex"/>
    <property type="evidence" value="ECO:0007669"/>
    <property type="project" value="InterPro"/>
</dbReference>
<dbReference type="GO" id="GO:0004047">
    <property type="term" value="F:aminomethyltransferase activity"/>
    <property type="evidence" value="ECO:0007669"/>
    <property type="project" value="UniProtKB-UniRule"/>
</dbReference>
<dbReference type="GO" id="GO:0008483">
    <property type="term" value="F:transaminase activity"/>
    <property type="evidence" value="ECO:0007669"/>
    <property type="project" value="UniProtKB-KW"/>
</dbReference>
<dbReference type="GO" id="GO:0019464">
    <property type="term" value="P:glycine decarboxylation via glycine cleavage system"/>
    <property type="evidence" value="ECO:0007669"/>
    <property type="project" value="UniProtKB-UniRule"/>
</dbReference>
<dbReference type="FunFam" id="2.40.30.110:FF:000014">
    <property type="entry name" value="Aminomethyltransferase"/>
    <property type="match status" value="1"/>
</dbReference>
<dbReference type="FunFam" id="3.30.70.1400:FF:000001">
    <property type="entry name" value="Aminomethyltransferase"/>
    <property type="match status" value="1"/>
</dbReference>
<dbReference type="FunFam" id="4.10.1250.10:FF:000001">
    <property type="entry name" value="Aminomethyltransferase"/>
    <property type="match status" value="1"/>
</dbReference>
<dbReference type="Gene3D" id="2.40.30.110">
    <property type="entry name" value="Aminomethyltransferase beta-barrel domains"/>
    <property type="match status" value="1"/>
</dbReference>
<dbReference type="Gene3D" id="3.30.70.1400">
    <property type="entry name" value="Aminomethyltransferase beta-barrel domains"/>
    <property type="match status" value="1"/>
</dbReference>
<dbReference type="Gene3D" id="4.10.1250.10">
    <property type="entry name" value="Aminomethyltransferase fragment"/>
    <property type="match status" value="1"/>
</dbReference>
<dbReference type="Gene3D" id="3.30.1360.120">
    <property type="entry name" value="Probable tRNA modification gtpase trme, domain 1"/>
    <property type="match status" value="1"/>
</dbReference>
<dbReference type="HAMAP" id="MF_00259">
    <property type="entry name" value="GcvT"/>
    <property type="match status" value="1"/>
</dbReference>
<dbReference type="InterPro" id="IPR006223">
    <property type="entry name" value="GCS_T"/>
</dbReference>
<dbReference type="InterPro" id="IPR022903">
    <property type="entry name" value="GCS_T_bac"/>
</dbReference>
<dbReference type="InterPro" id="IPR013977">
    <property type="entry name" value="GCST_C"/>
</dbReference>
<dbReference type="InterPro" id="IPR006222">
    <property type="entry name" value="GCV_T_N"/>
</dbReference>
<dbReference type="InterPro" id="IPR028896">
    <property type="entry name" value="GcvT/YgfZ/DmdA"/>
</dbReference>
<dbReference type="InterPro" id="IPR029043">
    <property type="entry name" value="GcvT/YgfZ_C"/>
</dbReference>
<dbReference type="InterPro" id="IPR027266">
    <property type="entry name" value="TrmE/GcvT_dom1"/>
</dbReference>
<dbReference type="NCBIfam" id="TIGR00528">
    <property type="entry name" value="gcvT"/>
    <property type="match status" value="1"/>
</dbReference>
<dbReference type="NCBIfam" id="NF001567">
    <property type="entry name" value="PRK00389.1"/>
    <property type="match status" value="1"/>
</dbReference>
<dbReference type="PANTHER" id="PTHR43757">
    <property type="entry name" value="AMINOMETHYLTRANSFERASE"/>
    <property type="match status" value="1"/>
</dbReference>
<dbReference type="PANTHER" id="PTHR43757:SF2">
    <property type="entry name" value="AMINOMETHYLTRANSFERASE, MITOCHONDRIAL"/>
    <property type="match status" value="1"/>
</dbReference>
<dbReference type="Pfam" id="PF01571">
    <property type="entry name" value="GCV_T"/>
    <property type="match status" value="1"/>
</dbReference>
<dbReference type="Pfam" id="PF08669">
    <property type="entry name" value="GCV_T_C"/>
    <property type="match status" value="1"/>
</dbReference>
<dbReference type="PIRSF" id="PIRSF006487">
    <property type="entry name" value="GcvT"/>
    <property type="match status" value="1"/>
</dbReference>
<dbReference type="SUPFAM" id="SSF101790">
    <property type="entry name" value="Aminomethyltransferase beta-barrel domain"/>
    <property type="match status" value="1"/>
</dbReference>
<dbReference type="SUPFAM" id="SSF103025">
    <property type="entry name" value="Folate-binding domain"/>
    <property type="match status" value="1"/>
</dbReference>
<keyword id="KW-0032">Aminotransferase</keyword>
<keyword id="KW-0808">Transferase</keyword>
<organism>
    <name type="scientific">Clostridium botulinum (strain Kyoto / Type A2)</name>
    <dbReference type="NCBI Taxonomy" id="536232"/>
    <lineage>
        <taxon>Bacteria</taxon>
        <taxon>Bacillati</taxon>
        <taxon>Bacillota</taxon>
        <taxon>Clostridia</taxon>
        <taxon>Eubacteriales</taxon>
        <taxon>Clostridiaceae</taxon>
        <taxon>Clostridium</taxon>
    </lineage>
</organism>
<sequence length="370" mass="41658">MEGLKVTPLRGVYEEYGGKIVDFAGYELPTQFKGFLHEHHTVREKAGLFDVSHMGEAMVTGKDAGKFIQYLMTNDINVLKDNEVLYTFMCNEDGGVIDDLLVYKFAEDEFFLVINASNKDKDVKWIMDHKGDFDVEIVDVSDSIAQLAFQGPLAEEILQKIVDVDLQEIKFFKLKRDVLVDGKKCLVSRTGYTGEDGFEIYCKPEDAKELWHAILNAGKEEGAQPIGLGARDTLRFEASLLLYGNEMDETITPLEVGMGFFVKLKVEEDFIGKDALIKQKAEGVTRKLVGFELLDKGIPRHGYEVIKDGKVIGHVTTGYKSPTLNKAIGLALVEEQYSKIGTEFNIKVRKKKLKAVAIDKRFYTKKTKTK</sequence>